<gene>
    <name type="ORF">ORF18</name>
</gene>
<sequence length="104" mass="11555">MQSTRLTWTNARAQQAILALAATGHGVYCERAVAFVISAITNNSLSWPTLLNLFDLVVAVERNLFKKSWALNALVNFCVANGDGFTVQHQLLNKILGNLIEKYY</sequence>
<proteinExistence type="predicted"/>
<dbReference type="EMBL" id="U75930">
    <property type="protein sequence ID" value="AAC59017.1"/>
    <property type="molecule type" value="Genomic_DNA"/>
</dbReference>
<dbReference type="RefSeq" id="NP_046174.1">
    <property type="nucleotide sequence ID" value="NC_001875.2"/>
</dbReference>
<dbReference type="KEGG" id="vg:912065"/>
<dbReference type="OrthoDB" id="17008at10239"/>
<dbReference type="Proteomes" id="UP000009248">
    <property type="component" value="Genome"/>
</dbReference>
<dbReference type="InterPro" id="IPR009946">
    <property type="entry name" value="AcMNPV_Orf4"/>
</dbReference>
<dbReference type="Pfam" id="PF07346">
    <property type="entry name" value="DUF1477"/>
    <property type="match status" value="1"/>
</dbReference>
<organismHost>
    <name type="scientific">Orgyia pseudotsugata</name>
    <name type="common">Douglas-fir tussock moth</name>
    <dbReference type="NCBI Taxonomy" id="33414"/>
</organismHost>
<reference key="1">
    <citation type="journal article" date="1997" name="Virology">
        <title>The sequence of the Orgyia pseudotsugata multinucleocapsid nuclear polyhedrosis virus genome.</title>
        <authorList>
            <person name="Ahrens C.H."/>
            <person name="Russell R.R."/>
            <person name="Funk C.J."/>
            <person name="Evans J."/>
            <person name="Harwood S."/>
            <person name="Rohrmann G.F."/>
        </authorList>
    </citation>
    <scope>NUCLEOTIDE SEQUENCE [LARGE SCALE GENOMIC DNA]</scope>
</reference>
<feature type="chain" id="PRO_0000132953" description="Uncharacterized 11.6 kDa protein">
    <location>
        <begin position="1"/>
        <end position="104"/>
    </location>
</feature>
<accession>O10279</accession>
<protein>
    <recommendedName>
        <fullName>Uncharacterized 11.6 kDa protein</fullName>
    </recommendedName>
</protein>
<organism>
    <name type="scientific">Orgyia pseudotsugata multicapsid polyhedrosis virus</name>
    <name type="common">OpMNPV</name>
    <dbReference type="NCBI Taxonomy" id="262177"/>
    <lineage>
        <taxon>Viruses</taxon>
        <taxon>Viruses incertae sedis</taxon>
        <taxon>Naldaviricetes</taxon>
        <taxon>Lefavirales</taxon>
        <taxon>Baculoviridae</taxon>
        <taxon>Alphabaculovirus</taxon>
        <taxon>Alphabaculovirus orpseudotsugatae</taxon>
    </lineage>
</organism>
<keyword id="KW-1185">Reference proteome</keyword>
<name>Y019_NPVOP</name>